<accession>O83304</accession>
<organism>
    <name type="scientific">Treponema pallidum (strain Nichols)</name>
    <dbReference type="NCBI Taxonomy" id="243276"/>
    <lineage>
        <taxon>Bacteria</taxon>
        <taxon>Pseudomonadati</taxon>
        <taxon>Spirochaetota</taxon>
        <taxon>Spirochaetia</taxon>
        <taxon>Spirochaetales</taxon>
        <taxon>Treponemataceae</taxon>
        <taxon>Treponema</taxon>
    </lineage>
</organism>
<protein>
    <recommendedName>
        <fullName>Uncharacterized protein TP_0280</fullName>
    </recommendedName>
</protein>
<name>Y280_TREPA</name>
<gene>
    <name type="ordered locus">TP_0280</name>
</gene>
<keyword id="KW-1185">Reference proteome</keyword>
<sequence length="42" mass="4398">MSGSVCCACDTRFFRAQWVDCGFGGSSSVVVGASPQGLLRVR</sequence>
<proteinExistence type="predicted"/>
<dbReference type="EMBL" id="AE000520">
    <property type="protein sequence ID" value="AAC65277.1"/>
    <property type="molecule type" value="Genomic_DNA"/>
</dbReference>
<dbReference type="PIR" id="C71343">
    <property type="entry name" value="C71343"/>
</dbReference>
<dbReference type="IntAct" id="O83304">
    <property type="interactions" value="7"/>
</dbReference>
<dbReference type="STRING" id="243276.TP_0280"/>
<dbReference type="EnsemblBacteria" id="AAC65277">
    <property type="protein sequence ID" value="AAC65277"/>
    <property type="gene ID" value="TP_0280"/>
</dbReference>
<dbReference type="KEGG" id="tpa:TP_0280"/>
<dbReference type="HOGENOM" id="CLU_3334258_0_0_12"/>
<dbReference type="Proteomes" id="UP000000811">
    <property type="component" value="Chromosome"/>
</dbReference>
<reference key="1">
    <citation type="journal article" date="1998" name="Science">
        <title>Complete genome sequence of Treponema pallidum, the syphilis spirochete.</title>
        <authorList>
            <person name="Fraser C.M."/>
            <person name="Norris S.J."/>
            <person name="Weinstock G.M."/>
            <person name="White O."/>
            <person name="Sutton G.G."/>
            <person name="Dodson R.J."/>
            <person name="Gwinn M.L."/>
            <person name="Hickey E.K."/>
            <person name="Clayton R.A."/>
            <person name="Ketchum K.A."/>
            <person name="Sodergren E."/>
            <person name="Hardham J.M."/>
            <person name="McLeod M.P."/>
            <person name="Salzberg S.L."/>
            <person name="Peterson J.D."/>
            <person name="Khalak H.G."/>
            <person name="Richardson D.L."/>
            <person name="Howell J.K."/>
            <person name="Chidambaram M."/>
            <person name="Utterback T.R."/>
            <person name="McDonald L.A."/>
            <person name="Artiach P."/>
            <person name="Bowman C."/>
            <person name="Cotton M.D."/>
            <person name="Fujii C."/>
            <person name="Garland S.A."/>
            <person name="Hatch B."/>
            <person name="Horst K."/>
            <person name="Roberts K.M."/>
            <person name="Sandusky M."/>
            <person name="Weidman J.F."/>
            <person name="Smith H.O."/>
            <person name="Venter J.C."/>
        </authorList>
    </citation>
    <scope>NUCLEOTIDE SEQUENCE [LARGE SCALE GENOMIC DNA]</scope>
    <source>
        <strain>Nichols</strain>
    </source>
</reference>
<feature type="chain" id="PRO_0000202224" description="Uncharacterized protein TP_0280">
    <location>
        <begin position="1"/>
        <end position="42"/>
    </location>
</feature>